<reference key="1">
    <citation type="journal article" date="1993" name="Nature">
        <title>Rapid sequence evolution of the mammalian sex-determining gene SRY.</title>
        <authorList>
            <person name="Whitfield L.S."/>
            <person name="Lovell-Badge R."/>
            <person name="Goodfellow P.N."/>
        </authorList>
    </citation>
    <scope>NUCLEOTIDE SEQUENCE [GENOMIC DNA]</scope>
</reference>
<reference key="2">
    <citation type="submission" date="2004-07" db="EMBL/GenBank/DDBJ databases">
        <title>The DNA sequence of the chimpanzee Y chromosome.</title>
        <authorList>
            <person name="Hughes J.F."/>
            <person name="Pyntikova T."/>
            <person name="Skaletsky H."/>
            <person name="Minx P.J."/>
            <person name="Rozen S."/>
            <person name="Wilson R.K."/>
            <person name="Page D.C."/>
        </authorList>
    </citation>
    <scope>NUCLEOTIDE SEQUENCE [MRNA]</scope>
</reference>
<reference key="3">
    <citation type="submission" date="2006-08" db="EMBL/GenBank/DDBJ databases">
        <title>Positive selection in transcription factor genes on the human lineage.</title>
        <authorList>
            <person name="Nickel G.C."/>
            <person name="Tefft D.L."/>
            <person name="Trevarthen K."/>
            <person name="Funt J."/>
            <person name="Adams M.D."/>
        </authorList>
    </citation>
    <scope>NUCLEOTIDE SEQUENCE [GENOMIC DNA]</scope>
</reference>
<reference key="4">
    <citation type="journal article" date="1998" name="Biochem. Biophys. Res. Commun.">
        <title>Identification of conserved potentially regulatory sequences of the SRY gene from 10 different species of mammals.</title>
        <authorList>
            <person name="Margarit E."/>
            <person name="Guillen A."/>
            <person name="Rebordosa C."/>
            <person name="Vidal-Taboada J.M."/>
            <person name="Sanchez M."/>
            <person name="Ballesta F."/>
            <person name="Oliva R."/>
        </authorList>
    </citation>
    <scope>NUCLEOTIDE SEQUENCE [GENOMIC DNA] OF 1-102</scope>
</reference>
<comment type="function">
    <text evidence="1 2">Transcriptional regulator that controls a genetic switch in male development. It is necessary and sufficient for initiating male sex determination by directing the development of supporting cell precursors (pre-Sertoli cells) as Sertoli rather than granulosa cells. Involved in different aspects of gene regulation including promoter activation or repression. Binds to the DNA consensus sequence 5'-[AT]AACAA[AT]-3'. SRY HMG box recognizes DNA by partial intercalation in the minor groove and promotes DNA bending. Also involved in pre-mRNA splicing (By similarity). In male adult brain involved in the maintenance of motor functions of dopaminergic neurons (By similarity).</text>
</comment>
<comment type="subunit">
    <text evidence="2">Interacts with CALM, EP300, HDAC3, KPNB1, ZNF208 isoform KRAB-O, PARP1, SLC9A3R2 and WT1. The interaction with EP300 modulates its DNA-binding activity. The interaction with KPNB1 is sensitive to dissociation by Ran in the GTP-bound form. Interaction with PARP1 impaired its DNA-binding activity.</text>
</comment>
<comment type="subcellular location">
    <subcellularLocation>
        <location evidence="2">Nucleus speckle</location>
    </subcellularLocation>
    <subcellularLocation>
        <location evidence="2">Cytoplasm</location>
    </subcellularLocation>
    <subcellularLocation>
        <location evidence="2">Nucleus</location>
    </subcellularLocation>
</comment>
<comment type="similarity">
    <text evidence="5">Belongs to the SRY family.</text>
</comment>
<comment type="online information" name="Protein Spotlight">
    <link uri="https://www.proteinspotlight.org/back_issues/080"/>
    <text>The tenuous nature of sex - Issue 80 of March 2007</text>
</comment>
<accession>Q28798</accession>
<accession>A2T700</accession>
<gene>
    <name type="primary">SRY</name>
    <name type="synonym">TDF</name>
</gene>
<dbReference type="EMBL" id="X86380">
    <property type="protein sequence ID" value="CAA60140.1"/>
    <property type="molecule type" value="Genomic_DNA"/>
</dbReference>
<dbReference type="EMBL" id="AY679780">
    <property type="protein sequence ID" value="AAT84368.1"/>
    <property type="molecule type" value="mRNA"/>
</dbReference>
<dbReference type="EMBL" id="DQ977342">
    <property type="protein sequence ID" value="ABM91955.1"/>
    <property type="molecule type" value="Genomic_DNA"/>
</dbReference>
<dbReference type="EMBL" id="AJ222687">
    <property type="protein sequence ID" value="CAA10942.1"/>
    <property type="molecule type" value="Genomic_DNA"/>
</dbReference>
<dbReference type="PIR" id="S35558">
    <property type="entry name" value="S35558"/>
</dbReference>
<dbReference type="RefSeq" id="NP_001008988.1">
    <property type="nucleotide sequence ID" value="NM_001008988.1"/>
</dbReference>
<dbReference type="SMR" id="Q28798"/>
<dbReference type="FunCoup" id="Q28798">
    <property type="interactions" value="12"/>
</dbReference>
<dbReference type="STRING" id="9598.ENSPTRP00000038745"/>
<dbReference type="PaxDb" id="9598-ENSPTRP00000038745"/>
<dbReference type="Ensembl" id="ENSPTRT00000041956.4">
    <property type="protein sequence ID" value="ENSPTRP00000038745.3"/>
    <property type="gene ID" value="ENSPTRG00000022469.5"/>
</dbReference>
<dbReference type="GeneID" id="449510"/>
<dbReference type="KEGG" id="ptr:449510"/>
<dbReference type="CTD" id="6736"/>
<dbReference type="VGNC" id="VGNC:5889">
    <property type="gene designation" value="SRY"/>
</dbReference>
<dbReference type="eggNOG" id="KOG0527">
    <property type="taxonomic scope" value="Eukaryota"/>
</dbReference>
<dbReference type="GeneTree" id="ENSGT00940000165583"/>
<dbReference type="HOGENOM" id="CLU_1209425_0_0_1"/>
<dbReference type="InParanoid" id="Q28798"/>
<dbReference type="OMA" id="DCTKATH"/>
<dbReference type="Proteomes" id="UP000002277">
    <property type="component" value="Chromosome Y"/>
</dbReference>
<dbReference type="Bgee" id="ENSPTRG00000022469">
    <property type="expression patterns" value="Expressed in fibroblast and 1 other cell type or tissue"/>
</dbReference>
<dbReference type="GO" id="GO:0005737">
    <property type="term" value="C:cytoplasm"/>
    <property type="evidence" value="ECO:0007669"/>
    <property type="project" value="UniProtKB-SubCell"/>
</dbReference>
<dbReference type="GO" id="GO:0016607">
    <property type="term" value="C:nuclear speck"/>
    <property type="evidence" value="ECO:0007669"/>
    <property type="project" value="UniProtKB-SubCell"/>
</dbReference>
<dbReference type="GO" id="GO:0005634">
    <property type="term" value="C:nucleus"/>
    <property type="evidence" value="ECO:0000250"/>
    <property type="project" value="UniProtKB"/>
</dbReference>
<dbReference type="GO" id="GO:0005516">
    <property type="term" value="F:calmodulin binding"/>
    <property type="evidence" value="ECO:0007669"/>
    <property type="project" value="UniProtKB-KW"/>
</dbReference>
<dbReference type="GO" id="GO:0001228">
    <property type="term" value="F:DNA-binding transcription activator activity, RNA polymerase II-specific"/>
    <property type="evidence" value="ECO:0000318"/>
    <property type="project" value="GO_Central"/>
</dbReference>
<dbReference type="GO" id="GO:0140297">
    <property type="term" value="F:DNA-binding transcription factor binding"/>
    <property type="evidence" value="ECO:0007669"/>
    <property type="project" value="Ensembl"/>
</dbReference>
<dbReference type="GO" id="GO:0000978">
    <property type="term" value="F:RNA polymerase II cis-regulatory region sequence-specific DNA binding"/>
    <property type="evidence" value="ECO:0000318"/>
    <property type="project" value="GO_Central"/>
</dbReference>
<dbReference type="GO" id="GO:0030154">
    <property type="term" value="P:cell differentiation"/>
    <property type="evidence" value="ECO:0000318"/>
    <property type="project" value="GO_Central"/>
</dbReference>
<dbReference type="GO" id="GO:0030238">
    <property type="term" value="P:male sex determination"/>
    <property type="evidence" value="ECO:0000318"/>
    <property type="project" value="GO_Central"/>
</dbReference>
<dbReference type="GO" id="GO:0010628">
    <property type="term" value="P:positive regulation of gene expression"/>
    <property type="evidence" value="ECO:0000250"/>
    <property type="project" value="UniProtKB"/>
</dbReference>
<dbReference type="GO" id="GO:2000020">
    <property type="term" value="P:positive regulation of male gonad development"/>
    <property type="evidence" value="ECO:0007669"/>
    <property type="project" value="Ensembl"/>
</dbReference>
<dbReference type="GO" id="GO:0045944">
    <property type="term" value="P:positive regulation of transcription by RNA polymerase II"/>
    <property type="evidence" value="ECO:0000318"/>
    <property type="project" value="GO_Central"/>
</dbReference>
<dbReference type="GO" id="GO:0007548">
    <property type="term" value="P:sex differentiation"/>
    <property type="evidence" value="ECO:0007669"/>
    <property type="project" value="UniProtKB-KW"/>
</dbReference>
<dbReference type="CDD" id="cd22034">
    <property type="entry name" value="HMG-box_SoxA_SRY"/>
    <property type="match status" value="1"/>
</dbReference>
<dbReference type="FunFam" id="1.10.30.10:FF:000002">
    <property type="entry name" value="transcription factor Sox-2"/>
    <property type="match status" value="1"/>
</dbReference>
<dbReference type="Gene3D" id="1.10.30.10">
    <property type="entry name" value="High mobility group box domain"/>
    <property type="match status" value="1"/>
</dbReference>
<dbReference type="InterPro" id="IPR009071">
    <property type="entry name" value="HMG_box_dom"/>
</dbReference>
<dbReference type="InterPro" id="IPR036910">
    <property type="entry name" value="HMG_box_dom_sf"/>
</dbReference>
<dbReference type="InterPro" id="IPR017253">
    <property type="entry name" value="SRY"/>
</dbReference>
<dbReference type="InterPro" id="IPR050140">
    <property type="entry name" value="SRY-related_HMG-box_TF-like"/>
</dbReference>
<dbReference type="PANTHER" id="PTHR10270:SF161">
    <property type="entry name" value="SEX-DETERMINING REGION Y PROTEIN"/>
    <property type="match status" value="1"/>
</dbReference>
<dbReference type="PANTHER" id="PTHR10270">
    <property type="entry name" value="SOX TRANSCRIPTION FACTOR"/>
    <property type="match status" value="1"/>
</dbReference>
<dbReference type="Pfam" id="PF00505">
    <property type="entry name" value="HMG_box"/>
    <property type="match status" value="1"/>
</dbReference>
<dbReference type="PIRSF" id="PIRSF037653">
    <property type="entry name" value="SRY"/>
    <property type="match status" value="1"/>
</dbReference>
<dbReference type="SMART" id="SM00398">
    <property type="entry name" value="HMG"/>
    <property type="match status" value="1"/>
</dbReference>
<dbReference type="SUPFAM" id="SSF47095">
    <property type="entry name" value="HMG-box"/>
    <property type="match status" value="1"/>
</dbReference>
<dbReference type="PROSITE" id="PS50118">
    <property type="entry name" value="HMG_BOX_2"/>
    <property type="match status" value="1"/>
</dbReference>
<keyword id="KW-0010">Activator</keyword>
<keyword id="KW-0112">Calmodulin-binding</keyword>
<keyword id="KW-0963">Cytoplasm</keyword>
<keyword id="KW-0221">Differentiation</keyword>
<keyword id="KW-0238">DNA-binding</keyword>
<keyword id="KW-0539">Nucleus</keyword>
<keyword id="KW-1185">Reference proteome</keyword>
<keyword id="KW-0726">Sexual differentiation</keyword>
<keyword id="KW-0804">Transcription</keyword>
<keyword id="KW-0805">Transcription regulation</keyword>
<evidence type="ECO:0000250" key="1">
    <source>
        <dbReference type="UniProtKB" id="P36394"/>
    </source>
</evidence>
<evidence type="ECO:0000250" key="2">
    <source>
        <dbReference type="UniProtKB" id="Q05066"/>
    </source>
</evidence>
<evidence type="ECO:0000255" key="3">
    <source>
        <dbReference type="PROSITE-ProRule" id="PRU00267"/>
    </source>
</evidence>
<evidence type="ECO:0000256" key="4">
    <source>
        <dbReference type="SAM" id="MobiDB-lite"/>
    </source>
</evidence>
<evidence type="ECO:0000305" key="5"/>
<protein>
    <recommendedName>
        <fullName>Sex-determining region Y protein</fullName>
    </recommendedName>
    <alternativeName>
        <fullName>Testis-determining factor</fullName>
    </alternativeName>
</protein>
<name>SRY_PANTR</name>
<feature type="chain" id="PRO_0000048695" description="Sex-determining region Y protein">
    <location>
        <begin position="1"/>
        <end position="204"/>
    </location>
</feature>
<feature type="DNA-binding region" description="HMG box" evidence="3">
    <location>
        <begin position="60"/>
        <end position="128"/>
    </location>
</feature>
<feature type="region of interest" description="Disordered" evidence="4">
    <location>
        <begin position="175"/>
        <end position="204"/>
    </location>
</feature>
<feature type="compositionally biased region" description="Basic and acidic residues" evidence="4">
    <location>
        <begin position="194"/>
        <end position="204"/>
    </location>
</feature>
<organism>
    <name type="scientific">Pan troglodytes</name>
    <name type="common">Chimpanzee</name>
    <dbReference type="NCBI Taxonomy" id="9598"/>
    <lineage>
        <taxon>Eukaryota</taxon>
        <taxon>Metazoa</taxon>
        <taxon>Chordata</taxon>
        <taxon>Craniata</taxon>
        <taxon>Vertebrata</taxon>
        <taxon>Euteleostomi</taxon>
        <taxon>Mammalia</taxon>
        <taxon>Eutheria</taxon>
        <taxon>Euarchontoglires</taxon>
        <taxon>Primates</taxon>
        <taxon>Haplorrhini</taxon>
        <taxon>Catarrhini</taxon>
        <taxon>Hominidae</taxon>
        <taxon>Pan</taxon>
    </lineage>
</organism>
<proteinExistence type="evidence at transcript level"/>
<sequence length="204" mass="24047">MQSYASAMLSVFNSDDYSPAVQQNIPALRRSSSFLCTESYNSKYQRETGENSKDSVQDRVKRPMNAFFVWSRDQRRKMALENPRMRNSEISKQLGYQWKMLTEAEKWPFFQEAQKLQAMHREKYPNYKYRPRRKANMLPKNCSLLPADPASVLCSEVQLDNRLYRDDCTKATHSRMEHQLGHLPPINAASSPQQRDRYSHWTKL</sequence>